<protein>
    <recommendedName>
        <fullName>T-box transcription factor TBX4</fullName>
        <shortName>T-box protein 4</shortName>
    </recommendedName>
</protein>
<evidence type="ECO:0000250" key="1">
    <source>
        <dbReference type="UniProtKB" id="P57082"/>
    </source>
</evidence>
<evidence type="ECO:0000255" key="2">
    <source>
        <dbReference type="PROSITE-ProRule" id="PRU00201"/>
    </source>
</evidence>
<evidence type="ECO:0000256" key="3">
    <source>
        <dbReference type="SAM" id="MobiDB-lite"/>
    </source>
</evidence>
<evidence type="ECO:0000269" key="4">
    <source>
    </source>
</evidence>
<evidence type="ECO:0000305" key="5"/>
<evidence type="ECO:0007744" key="6">
    <source>
    </source>
</evidence>
<comment type="function">
    <text evidence="1">Transcriptional regulator that has an essential role in the organogenesis of lungs, pelvis, and hindlimbs.</text>
</comment>
<comment type="subcellular location">
    <subcellularLocation>
        <location evidence="2">Nucleus</location>
    </subcellularLocation>
</comment>
<comment type="developmental stage">
    <text evidence="4">First expressed at day 7.5, exclusively in the allantois where expression continues through day 8.5. At day 9.5, expression is found in the genital papilla, body wall and limb buds (higher levels in hindlimb). At day 12.5, expressed in the mesenchyme of the mandibular arch, of the lung and of that surrounding the trachea. Also found in the sinus venosus/common atrium of the developing heart.</text>
</comment>
<dbReference type="EMBL" id="AY075134">
    <property type="protein sequence ID" value="AAL77209.1"/>
    <property type="molecule type" value="mRNA"/>
</dbReference>
<dbReference type="EMBL" id="AL592465">
    <property type="status" value="NOT_ANNOTATED_CDS"/>
    <property type="molecule type" value="Genomic_DNA"/>
</dbReference>
<dbReference type="EMBL" id="CH466556">
    <property type="protein sequence ID" value="EDL15777.1"/>
    <property type="molecule type" value="Genomic_DNA"/>
</dbReference>
<dbReference type="EMBL" id="U57329">
    <property type="protein sequence ID" value="AAC53108.1"/>
    <property type="molecule type" value="mRNA"/>
</dbReference>
<dbReference type="CCDS" id="CCDS25196.1"/>
<dbReference type="PIR" id="S72230">
    <property type="entry name" value="S72230"/>
</dbReference>
<dbReference type="RefSeq" id="NP_035666.2">
    <property type="nucleotide sequence ID" value="NM_011536.3"/>
</dbReference>
<dbReference type="RefSeq" id="XP_006532843.1">
    <property type="nucleotide sequence ID" value="XM_006532780.2"/>
</dbReference>
<dbReference type="SMR" id="P70325"/>
<dbReference type="BioGRID" id="203989">
    <property type="interactions" value="1"/>
</dbReference>
<dbReference type="FunCoup" id="P70325">
    <property type="interactions" value="12"/>
</dbReference>
<dbReference type="IntAct" id="P70325">
    <property type="interactions" value="1"/>
</dbReference>
<dbReference type="STRING" id="10090.ENSMUSP00000103682"/>
<dbReference type="GlyGen" id="P70325">
    <property type="glycosylation" value="1 site"/>
</dbReference>
<dbReference type="iPTMnet" id="P70325"/>
<dbReference type="PhosphoSitePlus" id="P70325"/>
<dbReference type="PaxDb" id="10090-ENSMUSP00000103680"/>
<dbReference type="ProteomicsDB" id="263138"/>
<dbReference type="Antibodypedia" id="18589">
    <property type="antibodies" value="152 antibodies from 25 providers"/>
</dbReference>
<dbReference type="DNASU" id="21387"/>
<dbReference type="Ensembl" id="ENSMUST00000000096.12">
    <property type="protein sequence ID" value="ENSMUSP00000000096.6"/>
    <property type="gene ID" value="ENSMUSG00000000094.13"/>
</dbReference>
<dbReference type="Ensembl" id="ENSMUST00000108047.8">
    <property type="protein sequence ID" value="ENSMUSP00000103682.2"/>
    <property type="gene ID" value="ENSMUSG00000000094.13"/>
</dbReference>
<dbReference type="GeneID" id="21387"/>
<dbReference type="KEGG" id="mmu:21387"/>
<dbReference type="UCSC" id="uc007ksc.2">
    <property type="organism name" value="mouse"/>
</dbReference>
<dbReference type="AGR" id="MGI:102556"/>
<dbReference type="CTD" id="9496"/>
<dbReference type="MGI" id="MGI:102556">
    <property type="gene designation" value="Tbx4"/>
</dbReference>
<dbReference type="VEuPathDB" id="HostDB:ENSMUSG00000000094"/>
<dbReference type="eggNOG" id="KOG3585">
    <property type="taxonomic scope" value="Eukaryota"/>
</dbReference>
<dbReference type="GeneTree" id="ENSGT00940000158882"/>
<dbReference type="InParanoid" id="P70325"/>
<dbReference type="OMA" id="VCERKAP"/>
<dbReference type="OrthoDB" id="7442607at2759"/>
<dbReference type="PhylomeDB" id="P70325"/>
<dbReference type="BioGRID-ORCS" id="21387">
    <property type="hits" value="1 hit in 79 CRISPR screens"/>
</dbReference>
<dbReference type="ChiTaRS" id="Tbx4">
    <property type="organism name" value="mouse"/>
</dbReference>
<dbReference type="PRO" id="PR:P70325"/>
<dbReference type="Proteomes" id="UP000000589">
    <property type="component" value="Chromosome 11"/>
</dbReference>
<dbReference type="RNAct" id="P70325">
    <property type="molecule type" value="protein"/>
</dbReference>
<dbReference type="Bgee" id="ENSMUSG00000000094">
    <property type="expression patterns" value="Expressed in secondary oocyte and 112 other cell types or tissues"/>
</dbReference>
<dbReference type="ExpressionAtlas" id="P70325">
    <property type="expression patterns" value="baseline and differential"/>
</dbReference>
<dbReference type="GO" id="GO:0005634">
    <property type="term" value="C:nucleus"/>
    <property type="evidence" value="ECO:0007669"/>
    <property type="project" value="UniProtKB-SubCell"/>
</dbReference>
<dbReference type="GO" id="GO:0003700">
    <property type="term" value="F:DNA-binding transcription factor activity"/>
    <property type="evidence" value="ECO:0007669"/>
    <property type="project" value="InterPro"/>
</dbReference>
<dbReference type="GO" id="GO:0000978">
    <property type="term" value="F:RNA polymerase II cis-regulatory region sequence-specific DNA binding"/>
    <property type="evidence" value="ECO:0007669"/>
    <property type="project" value="InterPro"/>
</dbReference>
<dbReference type="GO" id="GO:0001525">
    <property type="term" value="P:angiogenesis"/>
    <property type="evidence" value="ECO:0000315"/>
    <property type="project" value="MGI"/>
</dbReference>
<dbReference type="GO" id="GO:0035116">
    <property type="term" value="P:embryonic hindlimb morphogenesis"/>
    <property type="evidence" value="ECO:0000250"/>
    <property type="project" value="UniProtKB"/>
</dbReference>
<dbReference type="GO" id="GO:0030326">
    <property type="term" value="P:embryonic limb morphogenesis"/>
    <property type="evidence" value="ECO:0000315"/>
    <property type="project" value="MGI"/>
</dbReference>
<dbReference type="GO" id="GO:1990401">
    <property type="term" value="P:embryonic lung development"/>
    <property type="evidence" value="ECO:0000250"/>
    <property type="project" value="UniProtKB"/>
</dbReference>
<dbReference type="GO" id="GO:0035108">
    <property type="term" value="P:limb morphogenesis"/>
    <property type="evidence" value="ECO:0000314"/>
    <property type="project" value="MGI"/>
</dbReference>
<dbReference type="GO" id="GO:0030324">
    <property type="term" value="P:lung development"/>
    <property type="evidence" value="ECO:0000315"/>
    <property type="project" value="MGI"/>
</dbReference>
<dbReference type="GO" id="GO:0002009">
    <property type="term" value="P:morphogenesis of an epithelium"/>
    <property type="evidence" value="ECO:0000315"/>
    <property type="project" value="MGI"/>
</dbReference>
<dbReference type="GO" id="GO:0045893">
    <property type="term" value="P:positive regulation of DNA-templated transcription"/>
    <property type="evidence" value="ECO:0007669"/>
    <property type="project" value="InterPro"/>
</dbReference>
<dbReference type="GO" id="GO:0048705">
    <property type="term" value="P:skeletal system morphogenesis"/>
    <property type="evidence" value="ECO:0000250"/>
    <property type="project" value="UniProtKB"/>
</dbReference>
<dbReference type="CDD" id="cd20189">
    <property type="entry name" value="T-box_TBX4_5-like"/>
    <property type="match status" value="1"/>
</dbReference>
<dbReference type="FunFam" id="2.60.40.820:FF:000005">
    <property type="entry name" value="T-box transcription factor TBX5"/>
    <property type="match status" value="1"/>
</dbReference>
<dbReference type="Gene3D" id="2.60.40.820">
    <property type="entry name" value="Transcription factor, T-box"/>
    <property type="match status" value="1"/>
</dbReference>
<dbReference type="InterPro" id="IPR008967">
    <property type="entry name" value="p53-like_TF_DNA-bd_sf"/>
</dbReference>
<dbReference type="InterPro" id="IPR046360">
    <property type="entry name" value="T-box_DNA-bd"/>
</dbReference>
<dbReference type="InterPro" id="IPR036960">
    <property type="entry name" value="T-box_sf"/>
</dbReference>
<dbReference type="InterPro" id="IPR001699">
    <property type="entry name" value="TF_T-box"/>
</dbReference>
<dbReference type="InterPro" id="IPR018186">
    <property type="entry name" value="TF_T-box_CS"/>
</dbReference>
<dbReference type="PANTHER" id="PTHR11267">
    <property type="entry name" value="T-BOX PROTEIN-RELATED"/>
    <property type="match status" value="1"/>
</dbReference>
<dbReference type="PANTHER" id="PTHR11267:SF29">
    <property type="entry name" value="T-BOX TRANSCRIPTION FACTOR TBX4"/>
    <property type="match status" value="1"/>
</dbReference>
<dbReference type="Pfam" id="PF00907">
    <property type="entry name" value="T-box"/>
    <property type="match status" value="1"/>
</dbReference>
<dbReference type="PRINTS" id="PR00937">
    <property type="entry name" value="TBOX"/>
</dbReference>
<dbReference type="SMART" id="SM00425">
    <property type="entry name" value="TBOX"/>
    <property type="match status" value="1"/>
</dbReference>
<dbReference type="SUPFAM" id="SSF49417">
    <property type="entry name" value="p53-like transcription factors"/>
    <property type="match status" value="1"/>
</dbReference>
<dbReference type="PROSITE" id="PS01283">
    <property type="entry name" value="TBOX_1"/>
    <property type="match status" value="1"/>
</dbReference>
<dbReference type="PROSITE" id="PS01264">
    <property type="entry name" value="TBOX_2"/>
    <property type="match status" value="1"/>
</dbReference>
<dbReference type="PROSITE" id="PS50252">
    <property type="entry name" value="TBOX_3"/>
    <property type="match status" value="1"/>
</dbReference>
<reference key="1">
    <citation type="submission" date="2002-01" db="EMBL/GenBank/DDBJ databases">
        <authorList>
            <person name="Arruda E.P."/>
            <person name="Bruneau B.G."/>
        </authorList>
    </citation>
    <scope>NUCLEOTIDE SEQUENCE [MRNA]</scope>
    <source>
        <strain>129/SvEv</strain>
    </source>
</reference>
<reference key="2">
    <citation type="journal article" date="2009" name="PLoS Biol.">
        <title>Lineage-specific biology revealed by a finished genome assembly of the mouse.</title>
        <authorList>
            <person name="Church D.M."/>
            <person name="Goodstadt L."/>
            <person name="Hillier L.W."/>
            <person name="Zody M.C."/>
            <person name="Goldstein S."/>
            <person name="She X."/>
            <person name="Bult C.J."/>
            <person name="Agarwala R."/>
            <person name="Cherry J.L."/>
            <person name="DiCuccio M."/>
            <person name="Hlavina W."/>
            <person name="Kapustin Y."/>
            <person name="Meric P."/>
            <person name="Maglott D."/>
            <person name="Birtle Z."/>
            <person name="Marques A.C."/>
            <person name="Graves T."/>
            <person name="Zhou S."/>
            <person name="Teague B."/>
            <person name="Potamousis K."/>
            <person name="Churas C."/>
            <person name="Place M."/>
            <person name="Herschleb J."/>
            <person name="Runnheim R."/>
            <person name="Forrest D."/>
            <person name="Amos-Landgraf J."/>
            <person name="Schwartz D.C."/>
            <person name="Cheng Z."/>
            <person name="Lindblad-Toh K."/>
            <person name="Eichler E.E."/>
            <person name="Ponting C.P."/>
        </authorList>
    </citation>
    <scope>NUCLEOTIDE SEQUENCE [LARGE SCALE GENOMIC DNA]</scope>
    <source>
        <strain>C57BL/6J</strain>
    </source>
</reference>
<reference key="3">
    <citation type="submission" date="2005-07" db="EMBL/GenBank/DDBJ databases">
        <authorList>
            <person name="Mural R.J."/>
            <person name="Adams M.D."/>
            <person name="Myers E.W."/>
            <person name="Smith H.O."/>
            <person name="Venter J.C."/>
        </authorList>
    </citation>
    <scope>NUCLEOTIDE SEQUENCE [LARGE SCALE GENOMIC DNA]</scope>
</reference>
<reference key="4">
    <citation type="journal article" date="1996" name="Genetics">
        <title>Evolution of mouse T-box genes by tandem duplication and cluster dispersion.</title>
        <authorList>
            <person name="Agulnik S.I."/>
            <person name="Garvey N."/>
            <person name="Hancock S."/>
            <person name="Ruvinsky I."/>
            <person name="Chapman D.L."/>
            <person name="Agulnik I."/>
            <person name="Bollag R.J."/>
            <person name="Papaioannou V.E."/>
            <person name="Silver L.M."/>
        </authorList>
    </citation>
    <scope>NUCLEOTIDE SEQUENCE [MRNA] OF 92-265</scope>
    <source>
        <tissue>Embryo</tissue>
    </source>
</reference>
<reference key="5">
    <citation type="journal article" date="1996" name="Dev. Dyn.">
        <title>Expression of the T-box family genes, Tbx1-Tbx5, during early mouse development.</title>
        <authorList>
            <person name="Chapman D.L."/>
            <person name="Garvey N."/>
            <person name="Hancock S."/>
            <person name="Alexiou M."/>
            <person name="Agulnik S.I."/>
            <person name="Gibson-Brown J.J."/>
            <person name="Cebra-Thomas J."/>
            <person name="Bollag R.J."/>
            <person name="Silver L.M."/>
            <person name="Papaioannou V.E."/>
        </authorList>
    </citation>
    <scope>DEVELOPMENTAL STAGE</scope>
</reference>
<reference key="6">
    <citation type="journal article" date="2010" name="Cell">
        <title>A tissue-specific atlas of mouse protein phosphorylation and expression.</title>
        <authorList>
            <person name="Huttlin E.L."/>
            <person name="Jedrychowski M.P."/>
            <person name="Elias J.E."/>
            <person name="Goswami T."/>
            <person name="Rad R."/>
            <person name="Beausoleil S.A."/>
            <person name="Villen J."/>
            <person name="Haas W."/>
            <person name="Sowa M.E."/>
            <person name="Gygi S.P."/>
        </authorList>
    </citation>
    <scope>PHOSPHORYLATION [LARGE SCALE ANALYSIS] AT SER-514</scope>
    <scope>IDENTIFICATION BY MASS SPECTROMETRY [LARGE SCALE ANALYSIS]</scope>
    <source>
        <tissue>Lung</tissue>
    </source>
</reference>
<name>TBX4_MOUSE</name>
<gene>
    <name type="primary">Tbx4</name>
</gene>
<organism>
    <name type="scientific">Mus musculus</name>
    <name type="common">Mouse</name>
    <dbReference type="NCBI Taxonomy" id="10090"/>
    <lineage>
        <taxon>Eukaryota</taxon>
        <taxon>Metazoa</taxon>
        <taxon>Chordata</taxon>
        <taxon>Craniata</taxon>
        <taxon>Vertebrata</taxon>
        <taxon>Euteleostomi</taxon>
        <taxon>Mammalia</taxon>
        <taxon>Eutheria</taxon>
        <taxon>Euarchontoglires</taxon>
        <taxon>Glires</taxon>
        <taxon>Rodentia</taxon>
        <taxon>Myomorpha</taxon>
        <taxon>Muroidea</taxon>
        <taxon>Muridae</taxon>
        <taxon>Murinae</taxon>
        <taxon>Mus</taxon>
        <taxon>Mus</taxon>
    </lineage>
</organism>
<feature type="chain" id="PRO_0000184434" description="T-box transcription factor TBX4">
    <location>
        <begin position="1"/>
        <end position="552"/>
    </location>
</feature>
<feature type="DNA-binding region" description="T-box" evidence="2">
    <location>
        <begin position="76"/>
        <end position="256"/>
    </location>
</feature>
<feature type="region of interest" description="Disordered" evidence="3">
    <location>
        <begin position="1"/>
        <end position="50"/>
    </location>
</feature>
<feature type="compositionally biased region" description="Basic and acidic residues" evidence="3">
    <location>
        <begin position="1"/>
        <end position="14"/>
    </location>
</feature>
<feature type="modified residue" description="Phosphoserine" evidence="6">
    <location>
        <position position="514"/>
    </location>
</feature>
<feature type="sequence conflict" description="In Ref. 1; AAL77209." evidence="5" ref="1">
    <original>EQ</original>
    <variation>DE</variation>
    <location>
        <begin position="66"/>
        <end position="67"/>
    </location>
</feature>
<feature type="sequence conflict" description="In Ref. 4; AAC53108." evidence="5" ref="4">
    <location>
        <position position="148"/>
    </location>
</feature>
<feature type="sequence conflict" description="In Ref. 1; AAL77209." evidence="5" ref="1">
    <original>S</original>
    <variation>R</variation>
    <location>
        <position position="269"/>
    </location>
</feature>
<feature type="sequence conflict" description="In Ref. 1; AAL77209." evidence="5" ref="1">
    <original>A</original>
    <variation>G</variation>
    <location>
        <position position="301"/>
    </location>
</feature>
<keyword id="KW-0217">Developmental protein</keyword>
<keyword id="KW-0238">DNA-binding</keyword>
<keyword id="KW-0539">Nucleus</keyword>
<keyword id="KW-0597">Phosphoprotein</keyword>
<keyword id="KW-1185">Reference proteome</keyword>
<keyword id="KW-0804">Transcription</keyword>
<keyword id="KW-0805">Transcription regulation</keyword>
<accession>P70325</accession>
<accession>B1AQT9</accession>
<accession>Q8R5F6</accession>
<sequence>MLQDKGLSESEEAFRAPGPALGEASNTSTTNAPEPALATPGLSGAALSSPPGQGADVAAAAAAAAEQTIENIKVGLHEKELWKKFHEAGTEMIITKAGRRMFPSYKVKVTGMNPKTKYILLIDIVPADDHRYKFCDNKWMVAGKAEPAMPGRLYVHPDSPATGAHWMRQLVSFQKLKLTNNHLDPFGHIILNSMHKYQPRLHIVKADENNAFGSKNTAFCTHVFPETSFISVTSYQNHKITQLKIENNPFAKGFRGSDDSDLRVARLQSKEYPVISKSIMRQRLVSSQLSAKPDVSPLHSAHQALQHYQYENGAHMQFAAAEPQDLPLNTFPTQRDSSLFYHCLKRRDSARHLDLPCKRSYLETPSSVGDDHYFRSPPPYDQQMLSPSYCSEVTPREACMYSSSGPEIAGVSAVDDLPPPPLSCNMWTSVSPYTSYSVQTMETVPYQPFPAHFTATTVMPRLPTIAAQSAQPPGNAHFSVYNQLSQSQVRERGPSASFPRERGLPGMCERKPPSPHLNTANEFLYSQSFSLTRESSLQYHSGMGTVENWTDG</sequence>
<proteinExistence type="evidence at protein level"/>